<name>SDO1_METTH</name>
<organism>
    <name type="scientific">Methanothermobacter thermautotrophicus (strain ATCC 29096 / DSM 1053 / JCM 10044 / NBRC 100330 / Delta H)</name>
    <name type="common">Methanobacterium thermoautotrophicum</name>
    <dbReference type="NCBI Taxonomy" id="187420"/>
    <lineage>
        <taxon>Archaea</taxon>
        <taxon>Methanobacteriati</taxon>
        <taxon>Methanobacteriota</taxon>
        <taxon>Methanomada group</taxon>
        <taxon>Methanobacteria</taxon>
        <taxon>Methanobacteriales</taxon>
        <taxon>Methanobacteriaceae</taxon>
        <taxon>Methanothermobacter</taxon>
    </lineage>
</organism>
<proteinExistence type="evidence at protein level"/>
<feature type="chain" id="PRO_0000123770" description="Ribosome maturation protein SDO1 homolog">
    <location>
        <begin position="1"/>
        <end position="232"/>
    </location>
</feature>
<feature type="turn" evidence="2">
    <location>
        <begin position="4"/>
        <end position="6"/>
    </location>
</feature>
<feature type="strand" evidence="2">
    <location>
        <begin position="8"/>
        <end position="14"/>
    </location>
</feature>
<feature type="strand" evidence="2">
    <location>
        <begin position="17"/>
        <end position="23"/>
    </location>
</feature>
<feature type="helix" evidence="2">
    <location>
        <begin position="25"/>
        <end position="32"/>
    </location>
</feature>
<feature type="helix" evidence="2">
    <location>
        <begin position="40"/>
        <end position="43"/>
    </location>
</feature>
<feature type="strand" evidence="2">
    <location>
        <begin position="44"/>
        <end position="47"/>
    </location>
</feature>
<feature type="strand" evidence="2">
    <location>
        <begin position="50"/>
        <end position="52"/>
    </location>
</feature>
<feature type="turn" evidence="2">
    <location>
        <begin position="53"/>
        <end position="56"/>
    </location>
</feature>
<feature type="helix" evidence="2">
    <location>
        <begin position="61"/>
        <end position="68"/>
    </location>
</feature>
<feature type="helix" evidence="2">
    <location>
        <begin position="73"/>
        <end position="83"/>
    </location>
</feature>
<feature type="strand" evidence="2">
    <location>
        <begin position="84"/>
        <end position="87"/>
    </location>
</feature>
<feature type="helix" evidence="2">
    <location>
        <begin position="90"/>
        <end position="111"/>
    </location>
</feature>
<feature type="turn" evidence="2">
    <location>
        <begin position="115"/>
        <end position="117"/>
    </location>
</feature>
<feature type="helix" evidence="2">
    <location>
        <begin position="123"/>
        <end position="132"/>
    </location>
</feature>
<feature type="strand" evidence="2">
    <location>
        <begin position="139"/>
        <end position="141"/>
    </location>
</feature>
<feature type="helix" evidence="2">
    <location>
        <begin position="143"/>
        <end position="154"/>
    </location>
</feature>
<feature type="turn" evidence="2">
    <location>
        <begin position="155"/>
        <end position="157"/>
    </location>
</feature>
<feature type="strand" evidence="2">
    <location>
        <begin position="164"/>
        <end position="171"/>
    </location>
</feature>
<feature type="helix" evidence="2">
    <location>
        <begin position="173"/>
        <end position="175"/>
    </location>
</feature>
<feature type="helix" evidence="2">
    <location>
        <begin position="176"/>
        <end position="186"/>
    </location>
</feature>
<feature type="strand" evidence="2">
    <location>
        <begin position="188"/>
        <end position="194"/>
    </location>
</feature>
<feature type="strand" evidence="2">
    <location>
        <begin position="200"/>
        <end position="207"/>
    </location>
</feature>
<feature type="helix" evidence="2">
    <location>
        <begin position="208"/>
        <end position="210"/>
    </location>
</feature>
<feature type="helix" evidence="2">
    <location>
        <begin position="211"/>
        <end position="221"/>
    </location>
</feature>
<feature type="turn" evidence="2">
    <location>
        <begin position="222"/>
        <end position="224"/>
    </location>
</feature>
<feature type="strand" evidence="2">
    <location>
        <begin position="227"/>
        <end position="230"/>
    </location>
</feature>
<keyword id="KW-0002">3D-structure</keyword>
<keyword id="KW-1185">Reference proteome</keyword>
<reference key="1">
    <citation type="journal article" date="1997" name="J. Bacteriol.">
        <title>Complete genome sequence of Methanobacterium thermoautotrophicum deltaH: functional analysis and comparative genomics.</title>
        <authorList>
            <person name="Smith D.R."/>
            <person name="Doucette-Stamm L.A."/>
            <person name="Deloughery C."/>
            <person name="Lee H.-M."/>
            <person name="Dubois J."/>
            <person name="Aldredge T."/>
            <person name="Bashirzadeh R."/>
            <person name="Blakely D."/>
            <person name="Cook R."/>
            <person name="Gilbert K."/>
            <person name="Harrison D."/>
            <person name="Hoang L."/>
            <person name="Keagle P."/>
            <person name="Lumm W."/>
            <person name="Pothier B."/>
            <person name="Qiu D."/>
            <person name="Spadafora R."/>
            <person name="Vicare R."/>
            <person name="Wang Y."/>
            <person name="Wierzbowski J."/>
            <person name="Gibson R."/>
            <person name="Jiwani N."/>
            <person name="Caruso A."/>
            <person name="Bush D."/>
            <person name="Safer H."/>
            <person name="Patwell D."/>
            <person name="Prabhakar S."/>
            <person name="McDougall S."/>
            <person name="Shimer G."/>
            <person name="Goyal A."/>
            <person name="Pietrovski S."/>
            <person name="Church G.M."/>
            <person name="Daniels C.J."/>
            <person name="Mao J.-I."/>
            <person name="Rice P."/>
            <person name="Noelling J."/>
            <person name="Reeve J.N."/>
        </authorList>
    </citation>
    <scope>NUCLEOTIDE SEQUENCE [LARGE SCALE GENOMIC DNA]</scope>
    <source>
        <strain>ATCC 29096 / DSM 1053 / JCM 10044 / NBRC 100330 / Delta H</strain>
    </source>
</reference>
<reference key="2">
    <citation type="journal article" date="2009" name="BMC Struct. Biol.">
        <title>Conformational flexibility and molecular interactions of an archaeal homologue of the Shwachman-Bodian-Diamond syndrome protein.</title>
        <authorList>
            <person name="Ng C.L."/>
            <person name="Waterman D.G."/>
            <person name="Koonin E.V."/>
            <person name="Walters A.D."/>
            <person name="Chong J.P."/>
            <person name="Isupov M.N."/>
            <person name="Lebedev A.A."/>
            <person name="Bunka D.H."/>
            <person name="Stockley P.G."/>
            <person name="Ortiz-Lombardia M."/>
            <person name="Antson A.A."/>
        </authorList>
    </citation>
    <scope>X-RAY CRYSTALLOGRAPHY (1.75 ANGSTROMS)</scope>
</reference>
<gene>
    <name type="ordered locus">MTH_685</name>
</gene>
<comment type="similarity">
    <text evidence="1">Belongs to the SDO1/SBDS family.</text>
</comment>
<sequence length="232" mass="26193">MVSLEDAVIARLESHGERFEVLVDPDLAAEFRREDSDVSVEDVLAVQEVFRDARKGDKASEEAMRKVFETADPLEVTPVILRRGTIQLTAEQRRQMIEDKRLKIINKIAREAINPQNGLPHPPKRIEKAMEEARVHVDPFKTVDEQVNIVLKAIRTKIPIKFEKVRVAIKIPGERAGSAYGVISNFGKITNEEWQNDGSWIAVVEIPGGLQDSFYQKLSELTGGNVETRLIK</sequence>
<dbReference type="EMBL" id="AE000666">
    <property type="protein sequence ID" value="AAB85190.1"/>
    <property type="molecule type" value="Genomic_DNA"/>
</dbReference>
<dbReference type="PIR" id="C69191">
    <property type="entry name" value="C69191"/>
</dbReference>
<dbReference type="RefSeq" id="WP_010876324.1">
    <property type="nucleotide sequence ID" value="NC_000916.1"/>
</dbReference>
<dbReference type="PDB" id="2WBM">
    <property type="method" value="X-ray"/>
    <property type="resolution" value="1.75 A"/>
    <property type="chains" value="A/B=1-232"/>
</dbReference>
<dbReference type="PDBsum" id="2WBM"/>
<dbReference type="SMR" id="O26781"/>
<dbReference type="FunCoup" id="O26781">
    <property type="interactions" value="128"/>
</dbReference>
<dbReference type="STRING" id="187420.MTH_685"/>
<dbReference type="PaxDb" id="187420-MTH_685"/>
<dbReference type="EnsemblBacteria" id="AAB85190">
    <property type="protein sequence ID" value="AAB85190"/>
    <property type="gene ID" value="MTH_685"/>
</dbReference>
<dbReference type="KEGG" id="mth:MTH_685"/>
<dbReference type="PATRIC" id="fig|187420.15.peg.666"/>
<dbReference type="HOGENOM" id="CLU_043216_2_0_2"/>
<dbReference type="InParanoid" id="O26781"/>
<dbReference type="EvolutionaryTrace" id="O26781"/>
<dbReference type="Proteomes" id="UP000005223">
    <property type="component" value="Chromosome"/>
</dbReference>
<dbReference type="GO" id="GO:0042256">
    <property type="term" value="P:cytosolic ribosome assembly"/>
    <property type="evidence" value="ECO:0007669"/>
    <property type="project" value="InterPro"/>
</dbReference>
<dbReference type="Gene3D" id="3.30.70.240">
    <property type="match status" value="1"/>
</dbReference>
<dbReference type="Gene3D" id="3.30.1250.10">
    <property type="entry name" value="Ribosome maturation protein SBDS, N-terminal domain"/>
    <property type="match status" value="1"/>
</dbReference>
<dbReference type="Gene3D" id="1.10.10.900">
    <property type="entry name" value="SBDS protein C-terminal domain, subdomain 1"/>
    <property type="match status" value="1"/>
</dbReference>
<dbReference type="InterPro" id="IPR035647">
    <property type="entry name" value="EFG_III/V"/>
</dbReference>
<dbReference type="InterPro" id="IPR018023">
    <property type="entry name" value="Ribosome_mat_SBDS_CS"/>
</dbReference>
<dbReference type="InterPro" id="IPR036786">
    <property type="entry name" value="Ribosome_mat_SBDS_N_sf"/>
</dbReference>
<dbReference type="InterPro" id="IPR002140">
    <property type="entry name" value="Sdo1/SBDS"/>
</dbReference>
<dbReference type="InterPro" id="IPR039100">
    <property type="entry name" value="Sdo1/SBDS-like"/>
</dbReference>
<dbReference type="InterPro" id="IPR046928">
    <property type="entry name" value="SDO1/SBDS_C"/>
</dbReference>
<dbReference type="InterPro" id="IPR018978">
    <property type="entry name" value="SDO1/SBDS_central"/>
</dbReference>
<dbReference type="InterPro" id="IPR037188">
    <property type="entry name" value="Sdo1/SBDS_central_sf"/>
</dbReference>
<dbReference type="InterPro" id="IPR019783">
    <property type="entry name" value="SDO1/SBDS_N"/>
</dbReference>
<dbReference type="NCBIfam" id="TIGR00291">
    <property type="entry name" value="RNA_SBDS"/>
    <property type="match status" value="1"/>
</dbReference>
<dbReference type="PANTHER" id="PTHR10927">
    <property type="entry name" value="RIBOSOME MATURATION PROTEIN SBDS"/>
    <property type="match status" value="1"/>
</dbReference>
<dbReference type="PANTHER" id="PTHR10927:SF4">
    <property type="entry name" value="RIBOSOME MATURATION PROTEIN SDO1 HOMOLOG"/>
    <property type="match status" value="1"/>
</dbReference>
<dbReference type="Pfam" id="PF20268">
    <property type="entry name" value="SBDS_C"/>
    <property type="match status" value="1"/>
</dbReference>
<dbReference type="Pfam" id="PF09377">
    <property type="entry name" value="SBDS_domain_II"/>
    <property type="match status" value="1"/>
</dbReference>
<dbReference type="Pfam" id="PF01172">
    <property type="entry name" value="SBDS_N"/>
    <property type="match status" value="1"/>
</dbReference>
<dbReference type="SUPFAM" id="SSF54980">
    <property type="entry name" value="EF-G C-terminal domain-like"/>
    <property type="match status" value="1"/>
</dbReference>
<dbReference type="SUPFAM" id="SSF89895">
    <property type="entry name" value="FYSH domain"/>
    <property type="match status" value="1"/>
</dbReference>
<dbReference type="SUPFAM" id="SSF109728">
    <property type="entry name" value="Hypothetical protein AF0491, middle domain"/>
    <property type="match status" value="1"/>
</dbReference>
<dbReference type="PROSITE" id="PS01267">
    <property type="entry name" value="UPF0023"/>
    <property type="match status" value="1"/>
</dbReference>
<accession>O26781</accession>
<evidence type="ECO:0000305" key="1"/>
<evidence type="ECO:0007829" key="2">
    <source>
        <dbReference type="PDB" id="2WBM"/>
    </source>
</evidence>
<protein>
    <recommendedName>
        <fullName>Ribosome maturation protein SDO1 homolog</fullName>
    </recommendedName>
</protein>